<reference key="1">
    <citation type="journal article" date="2000" name="J. Leukoc. Biol.">
        <title>Cloning and expression of bovine p47-phox and p67-phox: comparison with the human and murine homologs.</title>
        <authorList>
            <person name="Bunger P.L."/>
            <person name="Swain S.D."/>
            <person name="Clements M.K."/>
            <person name="Siemsen D.W."/>
            <person name="Davis A.R."/>
            <person name="Gauss K.A."/>
            <person name="Quinn M.T."/>
        </authorList>
    </citation>
    <scope>NUCLEOTIDE SEQUENCE [MRNA]</scope>
    <scope>FUNCTION</scope>
    <scope>SUBCELLULAR LOCATION</scope>
</reference>
<reference key="2">
    <citation type="journal article" date="2005" name="BMC Genomics">
        <title>Characterization of 954 bovine full-CDS cDNA sequences.</title>
        <authorList>
            <person name="Harhay G.P."/>
            <person name="Sonstegard T.S."/>
            <person name="Keele J.W."/>
            <person name="Heaton M.P."/>
            <person name="Clawson M.L."/>
            <person name="Snelling W.M."/>
            <person name="Wiedmann R.T."/>
            <person name="Van Tassell C.P."/>
            <person name="Smith T.P.L."/>
        </authorList>
    </citation>
    <scope>NUCLEOTIDE SEQUENCE [LARGE SCALE MRNA]</scope>
</reference>
<reference key="3">
    <citation type="submission" date="2005-08" db="EMBL/GenBank/DDBJ databases">
        <authorList>
            <consortium name="NIH - Mammalian Gene Collection (MGC) project"/>
        </authorList>
    </citation>
    <scope>NUCLEOTIDE SEQUENCE [LARGE SCALE MRNA]</scope>
    <source>
        <strain>Hereford</strain>
        <tissue>Hypothalamus</tissue>
    </source>
</reference>
<feature type="chain" id="PRO_0000096761" description="Neutrophil cytosol factor 1">
    <location>
        <begin position="1"/>
        <end position="392"/>
    </location>
</feature>
<feature type="domain" description="PX" evidence="3">
    <location>
        <begin position="4"/>
        <end position="125"/>
    </location>
</feature>
<feature type="domain" description="SH3 1" evidence="4">
    <location>
        <begin position="156"/>
        <end position="215"/>
    </location>
</feature>
<feature type="domain" description="SH3 2" evidence="4">
    <location>
        <begin position="226"/>
        <end position="285"/>
    </location>
</feature>
<feature type="region of interest" description="Disordered" evidence="5">
    <location>
        <begin position="290"/>
        <end position="392"/>
    </location>
</feature>
<feature type="compositionally biased region" description="Basic residues" evidence="5">
    <location>
        <begin position="310"/>
        <end position="319"/>
    </location>
</feature>
<feature type="compositionally biased region" description="Basic and acidic residues" evidence="5">
    <location>
        <begin position="376"/>
        <end position="385"/>
    </location>
</feature>
<feature type="modified residue" description="Phosphoserine" evidence="1">
    <location>
        <position position="304"/>
    </location>
</feature>
<feature type="modified residue" description="Phosphoserine" evidence="1">
    <location>
        <position position="305"/>
    </location>
</feature>
<feature type="modified residue" description="Phosphoserine" evidence="1">
    <location>
        <position position="321"/>
    </location>
</feature>
<feature type="modified residue" description="Phosphoserine" evidence="1">
    <location>
        <position position="329"/>
    </location>
</feature>
<feature type="modified residue" description="Phosphoserine" evidence="1">
    <location>
        <position position="348"/>
    </location>
</feature>
<evidence type="ECO:0000250" key="1">
    <source>
        <dbReference type="UniProtKB" id="P14598"/>
    </source>
</evidence>
<evidence type="ECO:0000250" key="2">
    <source>
        <dbReference type="UniProtKB" id="Q09014"/>
    </source>
</evidence>
<evidence type="ECO:0000255" key="3">
    <source>
        <dbReference type="PROSITE-ProRule" id="PRU00147"/>
    </source>
</evidence>
<evidence type="ECO:0000255" key="4">
    <source>
        <dbReference type="PROSITE-ProRule" id="PRU00192"/>
    </source>
</evidence>
<evidence type="ECO:0000256" key="5">
    <source>
        <dbReference type="SAM" id="MobiDB-lite"/>
    </source>
</evidence>
<evidence type="ECO:0000269" key="6">
    <source>
    </source>
</evidence>
<dbReference type="EMBL" id="AF079302">
    <property type="protein sequence ID" value="AAC82462.1"/>
    <property type="molecule type" value="mRNA"/>
</dbReference>
<dbReference type="EMBL" id="BT020852">
    <property type="protein sequence ID" value="AAX08869.1"/>
    <property type="molecule type" value="mRNA"/>
</dbReference>
<dbReference type="EMBL" id="BT021181">
    <property type="protein sequence ID" value="AAX31363.1"/>
    <property type="molecule type" value="mRNA"/>
</dbReference>
<dbReference type="EMBL" id="BC103145">
    <property type="protein sequence ID" value="AAI03146.1"/>
    <property type="molecule type" value="mRNA"/>
</dbReference>
<dbReference type="RefSeq" id="NP_776544.1">
    <property type="nucleotide sequence ID" value="NM_174119.5"/>
</dbReference>
<dbReference type="SMR" id="O77774"/>
<dbReference type="FunCoup" id="O77774">
    <property type="interactions" value="626"/>
</dbReference>
<dbReference type="STRING" id="9913.ENSBTAP00000004279"/>
<dbReference type="PaxDb" id="9913-ENSBTAP00000004279"/>
<dbReference type="GeneID" id="281345"/>
<dbReference type="KEGG" id="bta:281345"/>
<dbReference type="CTD" id="653361"/>
<dbReference type="eggNOG" id="KOG4773">
    <property type="taxonomic scope" value="Eukaryota"/>
</dbReference>
<dbReference type="HOGENOM" id="CLU_030529_0_0_1"/>
<dbReference type="InParanoid" id="O77774"/>
<dbReference type="OrthoDB" id="10255964at2759"/>
<dbReference type="TreeFam" id="TF329347"/>
<dbReference type="Proteomes" id="UP000009136">
    <property type="component" value="Unplaced"/>
</dbReference>
<dbReference type="GO" id="GO:0005737">
    <property type="term" value="C:cytoplasm"/>
    <property type="evidence" value="ECO:0000250"/>
    <property type="project" value="UniProtKB"/>
</dbReference>
<dbReference type="GO" id="GO:0009898">
    <property type="term" value="C:cytoplasmic side of plasma membrane"/>
    <property type="evidence" value="ECO:0000250"/>
    <property type="project" value="UniProtKB"/>
</dbReference>
<dbReference type="GO" id="GO:0005829">
    <property type="term" value="C:cytosol"/>
    <property type="evidence" value="ECO:0007669"/>
    <property type="project" value="UniProtKB-SubCell"/>
</dbReference>
<dbReference type="GO" id="GO:0016020">
    <property type="term" value="C:membrane"/>
    <property type="evidence" value="ECO:0000250"/>
    <property type="project" value="UniProtKB"/>
</dbReference>
<dbReference type="GO" id="GO:0043020">
    <property type="term" value="C:NADPH oxidase complex"/>
    <property type="evidence" value="ECO:0000250"/>
    <property type="project" value="UniProtKB"/>
</dbReference>
<dbReference type="GO" id="GO:0035091">
    <property type="term" value="F:phosphatidylinositol binding"/>
    <property type="evidence" value="ECO:0000250"/>
    <property type="project" value="UniProtKB"/>
</dbReference>
<dbReference type="GO" id="GO:0043325">
    <property type="term" value="F:phosphatidylinositol-3,4-bisphosphate binding"/>
    <property type="evidence" value="ECO:0000250"/>
    <property type="project" value="UniProtKB"/>
</dbReference>
<dbReference type="GO" id="GO:0016176">
    <property type="term" value="F:superoxide-generating NADPH oxidase activator activity"/>
    <property type="evidence" value="ECO:0000318"/>
    <property type="project" value="GO_Central"/>
</dbReference>
<dbReference type="GO" id="GO:0006612">
    <property type="term" value="P:protein targeting to membrane"/>
    <property type="evidence" value="ECO:0000250"/>
    <property type="project" value="UniProtKB"/>
</dbReference>
<dbReference type="GO" id="GO:0045730">
    <property type="term" value="P:respiratory burst"/>
    <property type="evidence" value="ECO:0000318"/>
    <property type="project" value="GO_Central"/>
</dbReference>
<dbReference type="GO" id="GO:0042554">
    <property type="term" value="P:superoxide anion generation"/>
    <property type="evidence" value="ECO:0000250"/>
    <property type="project" value="UniProtKB"/>
</dbReference>
<dbReference type="CDD" id="cd06887">
    <property type="entry name" value="PX_p47phox"/>
    <property type="match status" value="1"/>
</dbReference>
<dbReference type="CDD" id="cd12021">
    <property type="entry name" value="SH3_p47phox_1"/>
    <property type="match status" value="1"/>
</dbReference>
<dbReference type="CDD" id="cd12022">
    <property type="entry name" value="SH3_p47phox_2"/>
    <property type="match status" value="1"/>
</dbReference>
<dbReference type="FunFam" id="2.30.30.40:FF:000121">
    <property type="entry name" value="Neutrophil cytosol factor 1"/>
    <property type="match status" value="1"/>
</dbReference>
<dbReference type="FunFam" id="3.30.1520.10:FF:000023">
    <property type="entry name" value="Neutrophil cytosol factor 1"/>
    <property type="match status" value="1"/>
</dbReference>
<dbReference type="FunFam" id="2.30.30.40:FF:000127">
    <property type="entry name" value="neutrophil cytosol factor 1"/>
    <property type="match status" value="1"/>
</dbReference>
<dbReference type="Gene3D" id="3.30.1520.10">
    <property type="entry name" value="Phox-like domain"/>
    <property type="match status" value="1"/>
</dbReference>
<dbReference type="Gene3D" id="2.30.30.40">
    <property type="entry name" value="SH3 Domains"/>
    <property type="match status" value="2"/>
</dbReference>
<dbReference type="InterPro" id="IPR051228">
    <property type="entry name" value="NADPH_Oxidase/PX-Domain"/>
</dbReference>
<dbReference type="InterPro" id="IPR015039">
    <property type="entry name" value="NCF1_C"/>
</dbReference>
<dbReference type="InterPro" id="IPR032136">
    <property type="entry name" value="NCF1_PBR/AIR"/>
</dbReference>
<dbReference type="InterPro" id="IPR035756">
    <property type="entry name" value="NCF1_SH3_1"/>
</dbReference>
<dbReference type="InterPro" id="IPR035757">
    <property type="entry name" value="NCF1_SH3_2"/>
</dbReference>
<dbReference type="InterPro" id="IPR001655">
    <property type="entry name" value="P47PHOX"/>
</dbReference>
<dbReference type="InterPro" id="IPR001683">
    <property type="entry name" value="PX_dom"/>
</dbReference>
<dbReference type="InterPro" id="IPR036871">
    <property type="entry name" value="PX_dom_sf"/>
</dbReference>
<dbReference type="InterPro" id="IPR034909">
    <property type="entry name" value="PX_p47phox"/>
</dbReference>
<dbReference type="InterPro" id="IPR036028">
    <property type="entry name" value="SH3-like_dom_sf"/>
</dbReference>
<dbReference type="InterPro" id="IPR001452">
    <property type="entry name" value="SH3_domain"/>
</dbReference>
<dbReference type="PANTHER" id="PTHR15706:SF6">
    <property type="entry name" value="NEUTROPHIL CYTOSOL FACTOR 1-RELATED"/>
    <property type="match status" value="1"/>
</dbReference>
<dbReference type="PANTHER" id="PTHR15706">
    <property type="entry name" value="SH3 MULTIPLE DOMAIN"/>
    <property type="match status" value="1"/>
</dbReference>
<dbReference type="Pfam" id="PF16621">
    <property type="entry name" value="NCF1_PBR_AIR"/>
    <property type="match status" value="1"/>
</dbReference>
<dbReference type="Pfam" id="PF08944">
    <property type="entry name" value="p47_phox_C"/>
    <property type="match status" value="1"/>
</dbReference>
<dbReference type="Pfam" id="PF00787">
    <property type="entry name" value="PX"/>
    <property type="match status" value="1"/>
</dbReference>
<dbReference type="Pfam" id="PF00018">
    <property type="entry name" value="SH3_1"/>
    <property type="match status" value="2"/>
</dbReference>
<dbReference type="PRINTS" id="PR00498">
    <property type="entry name" value="P47PHOX"/>
</dbReference>
<dbReference type="PRINTS" id="PR00452">
    <property type="entry name" value="SH3DOMAIN"/>
</dbReference>
<dbReference type="SMART" id="SM00312">
    <property type="entry name" value="PX"/>
    <property type="match status" value="1"/>
</dbReference>
<dbReference type="SMART" id="SM00326">
    <property type="entry name" value="SH3"/>
    <property type="match status" value="2"/>
</dbReference>
<dbReference type="SUPFAM" id="SSF64268">
    <property type="entry name" value="PX domain"/>
    <property type="match status" value="1"/>
</dbReference>
<dbReference type="SUPFAM" id="SSF50044">
    <property type="entry name" value="SH3-domain"/>
    <property type="match status" value="2"/>
</dbReference>
<dbReference type="PROSITE" id="PS50195">
    <property type="entry name" value="PX"/>
    <property type="match status" value="1"/>
</dbReference>
<dbReference type="PROSITE" id="PS50002">
    <property type="entry name" value="SH3"/>
    <property type="match status" value="2"/>
</dbReference>
<organism>
    <name type="scientific">Bos taurus</name>
    <name type="common">Bovine</name>
    <dbReference type="NCBI Taxonomy" id="9913"/>
    <lineage>
        <taxon>Eukaryota</taxon>
        <taxon>Metazoa</taxon>
        <taxon>Chordata</taxon>
        <taxon>Craniata</taxon>
        <taxon>Vertebrata</taxon>
        <taxon>Euteleostomi</taxon>
        <taxon>Mammalia</taxon>
        <taxon>Eutheria</taxon>
        <taxon>Laurasiatheria</taxon>
        <taxon>Artiodactyla</taxon>
        <taxon>Ruminantia</taxon>
        <taxon>Pecora</taxon>
        <taxon>Bovidae</taxon>
        <taxon>Bovinae</taxon>
        <taxon>Bos</taxon>
    </lineage>
</organism>
<gene>
    <name evidence="1" type="primary">NCF1</name>
</gene>
<sequence length="392" mass="45346">MGDHFIRHIALLGFEKRFVPSQHYVYMFLVKWQDLSEKVVYRRFTEIYEFHKILKEMFPIEAGDINPENRIIPHLPAPRWYDGQRVAESRQGTLTEYCSTLMSLPVKISRCPHLLNFFKVRPDDLKLPTDSQVKKPETYLMPKDGKNNAADITGPIILQTYRAIADYEKGSSSQMALATGDVVDVVEKNESGWWFCQMKTKRGWVPASYLEPLDSPDEAEDPEPNYAGEPYITIKAYTAVLEDEISLEEGEAIEVIHKLLDGWWVIRKEDVTGYFPSMYLQKAGQDVAQAKSQIKSRGAPPRRSSIRNAHSIHQRSRKRLSQDTYRRNSVRFMQQRRHQRPEPQRSRSALREQQQPKTERPKPQPAVPPRPSADLILHRCSESTKRKLASAV</sequence>
<name>NCF1_BOVIN</name>
<proteinExistence type="evidence at transcript level"/>
<accession>O77774</accession>
<accession>Q5E9R8</accession>
<comment type="function">
    <text evidence="1 6">Subunit of the phagocyte NADPH oxidase complex that mediates the transfer of electrons from cytosolic NADPH to O2 to produce the superoxide anion (O2(-)) (PubMed:10647999). In the activated complex, electrons are first transferred from NADPH to flavin adenine dinucleotide (FAD) and subsequently transferred via two heme molecules to molecular oxygen, producing superoxide through an outer-sphere reaction. Activation of the NADPH oxidase complex is initiated by the assembly of cytosolic subunits of the NADPH oxidase complex with the core NADPH oxidase complex to form a complex at the plasma membrane or phagosomal membrane. This activation process is initiated by phosphorylation dependent binding of the cytosolic NCF1/p47-phox subunit to the C-terminus of CYBA/p22-phox (By similarity).</text>
</comment>
<comment type="subunit">
    <text evidence="1 2">Component of the phagocyte NADPH oxidase complex composed of an obligatory core heterodimer formed by the membrane proteins CYBA and CYBB and the cytosolic regulatory subunits NCF1/p47-phox, NCF2/p67-phox, NCF4/p40-phox and the small GTPase RAC1 or RAC2. Part of a cytosolic complex composed at least by NCF1, NCF2 and NCF4. Interacts (via C-terminus) with NCF2 (via the C-terminal SH3 domain). Interacts with NCF4. Interacts with CYBB. Interacts (via the second SH3 domain) with CYBA; interaction is phosphorylation-dependent. Interacts with NOXA1. Interacts with ADAM15. Interacts with TRAF4. Interacts with FASLG (By similarity). Interacts with PARK7 (via C-terminus); the interaction is enhanced by LPS and modulates NCF1 phosphorylation and membrane translocation (By similarity).</text>
</comment>
<comment type="subcellular location">
    <subcellularLocation>
        <location evidence="6">Cytoplasm</location>
        <location evidence="6">Cytosol</location>
    </subcellularLocation>
    <subcellularLocation>
        <location evidence="1">Membrane</location>
        <topology evidence="1">Peripheral membrane protein</topology>
        <orientation evidence="1">Cytoplasmic side</orientation>
    </subcellularLocation>
</comment>
<comment type="domain">
    <text evidence="1">The PX domain mediates interaction with phosphatidylinositol 3,4-bisphosphate and other anionic phospholipids. In the autoinhibited, unphosphorylated state an intramolecular interaction with the C-terminal SH3 domain precludes phospholipid binding and interaction with CYBA. Phosphorylation disrupts the autoinhibited state.</text>
</comment>
<comment type="PTM">
    <text evidence="1">Phosphorylated by PRKCD; phosphorylation induces activation of NCF1, leading to assembly and activation of the NADPH oxidase complex.</text>
</comment>
<keyword id="KW-0963">Cytoplasm</keyword>
<keyword id="KW-0446">Lipid-binding</keyword>
<keyword id="KW-0472">Membrane</keyword>
<keyword id="KW-0597">Phosphoprotein</keyword>
<keyword id="KW-1185">Reference proteome</keyword>
<keyword id="KW-0677">Repeat</keyword>
<keyword id="KW-0728">SH3 domain</keyword>
<protein>
    <recommendedName>
        <fullName evidence="1">Neutrophil cytosol factor 1</fullName>
        <shortName>NCF-1</shortName>
    </recommendedName>
    <alternativeName>
        <fullName>47 kDa neutrophil oxidase factor</fullName>
    </alternativeName>
    <alternativeName>
        <fullName>NCF-47K</fullName>
    </alternativeName>
    <alternativeName>
        <fullName>Neutrophil NADPH oxidase factor 1</fullName>
    </alternativeName>
    <alternativeName>
        <fullName>p47-phox</fullName>
    </alternativeName>
</protein>